<evidence type="ECO:0000255" key="1">
    <source>
        <dbReference type="HAMAP-Rule" id="MF_00260"/>
    </source>
</evidence>
<sequence>MQTKPFRIGTRGSPLALAQAYETRSRLMAAHGLPEEMFEIVVLSTKGDRITDRALSEIGGKGLFTEELENQLLSGELDIAVHSSKDMPTVLPEGLHLSAFLPREDMRDAFIGRTAPKLLELPQGAVVGSASLRRQALIRRLRPDLNVIVFRGLVDTRLRKLEEGQADATLLAFAGLKRLGKDNVPTEILDPKEFPPAPAQGAIGVESRIGDARMDKLLAPINDRPTYDAVTCERAFLAALDGSCRTPIAGYATCEGDNLHFSGLILTPDGQTSHGVEISGNRRDALILGKKAGEEVRAKAGSNFFEGWS</sequence>
<comment type="function">
    <text evidence="1">Tetrapolymerization of the monopyrrole PBG into the hydroxymethylbilane pre-uroporphyrinogen in several discrete steps.</text>
</comment>
<comment type="catalytic activity">
    <reaction evidence="1">
        <text>4 porphobilinogen + H2O = hydroxymethylbilane + 4 NH4(+)</text>
        <dbReference type="Rhea" id="RHEA:13185"/>
        <dbReference type="ChEBI" id="CHEBI:15377"/>
        <dbReference type="ChEBI" id="CHEBI:28938"/>
        <dbReference type="ChEBI" id="CHEBI:57845"/>
        <dbReference type="ChEBI" id="CHEBI:58126"/>
        <dbReference type="EC" id="2.5.1.61"/>
    </reaction>
</comment>
<comment type="cofactor">
    <cofactor evidence="1">
        <name>dipyrromethane</name>
        <dbReference type="ChEBI" id="CHEBI:60342"/>
    </cofactor>
    <text evidence="1">Binds 1 dipyrromethane group covalently.</text>
</comment>
<comment type="pathway">
    <text evidence="1">Porphyrin-containing compound metabolism; protoporphyrin-IX biosynthesis; coproporphyrinogen-III from 5-aminolevulinate: step 2/4.</text>
</comment>
<comment type="subunit">
    <text evidence="1">Monomer.</text>
</comment>
<comment type="miscellaneous">
    <text evidence="1">The porphobilinogen subunits are added to the dipyrromethane group.</text>
</comment>
<comment type="similarity">
    <text evidence="1">Belongs to the HMBS family.</text>
</comment>
<name>HEM3_AGRFC</name>
<gene>
    <name evidence="1" type="primary">hemC</name>
    <name type="ordered locus">Atu2652</name>
    <name type="ORF">AGR_C_4808</name>
</gene>
<protein>
    <recommendedName>
        <fullName evidence="1">Porphobilinogen deaminase</fullName>
        <shortName evidence="1">PBG</shortName>
        <ecNumber evidence="1">2.5.1.61</ecNumber>
    </recommendedName>
    <alternativeName>
        <fullName evidence="1">Hydroxymethylbilane synthase</fullName>
        <shortName evidence="1">HMBS</shortName>
    </alternativeName>
    <alternativeName>
        <fullName evidence="1">Pre-uroporphyrinogen synthase</fullName>
    </alternativeName>
</protein>
<proteinExistence type="inferred from homology"/>
<dbReference type="EC" id="2.5.1.61" evidence="1"/>
<dbReference type="EMBL" id="AE007869">
    <property type="protein sequence ID" value="AAK88374.1"/>
    <property type="molecule type" value="Genomic_DNA"/>
</dbReference>
<dbReference type="PIR" id="AC2902">
    <property type="entry name" value="AC2902"/>
</dbReference>
<dbReference type="PIR" id="E97677">
    <property type="entry name" value="E97677"/>
</dbReference>
<dbReference type="RefSeq" id="NP_355589.1">
    <property type="nucleotide sequence ID" value="NC_003062.2"/>
</dbReference>
<dbReference type="RefSeq" id="WP_010972466.1">
    <property type="nucleotide sequence ID" value="NC_003062.2"/>
</dbReference>
<dbReference type="SMR" id="Q8UC46"/>
<dbReference type="STRING" id="176299.Atu2652"/>
<dbReference type="EnsemblBacteria" id="AAK88374">
    <property type="protein sequence ID" value="AAK88374"/>
    <property type="gene ID" value="Atu2652"/>
</dbReference>
<dbReference type="GeneID" id="1134690"/>
<dbReference type="KEGG" id="atu:Atu2652"/>
<dbReference type="PATRIC" id="fig|176299.10.peg.2657"/>
<dbReference type="eggNOG" id="COG0181">
    <property type="taxonomic scope" value="Bacteria"/>
</dbReference>
<dbReference type="HOGENOM" id="CLU_019704_1_2_5"/>
<dbReference type="OrthoDB" id="9810298at2"/>
<dbReference type="PhylomeDB" id="Q8UC46"/>
<dbReference type="BioCyc" id="AGRO:ATU2652-MONOMER"/>
<dbReference type="UniPathway" id="UPA00251">
    <property type="reaction ID" value="UER00319"/>
</dbReference>
<dbReference type="Proteomes" id="UP000000813">
    <property type="component" value="Chromosome circular"/>
</dbReference>
<dbReference type="GO" id="GO:0005737">
    <property type="term" value="C:cytoplasm"/>
    <property type="evidence" value="ECO:0007669"/>
    <property type="project" value="TreeGrafter"/>
</dbReference>
<dbReference type="GO" id="GO:0004418">
    <property type="term" value="F:hydroxymethylbilane synthase activity"/>
    <property type="evidence" value="ECO:0007669"/>
    <property type="project" value="UniProtKB-UniRule"/>
</dbReference>
<dbReference type="GO" id="GO:0006782">
    <property type="term" value="P:protoporphyrinogen IX biosynthetic process"/>
    <property type="evidence" value="ECO:0007669"/>
    <property type="project" value="UniProtKB-UniRule"/>
</dbReference>
<dbReference type="FunFam" id="3.40.190.10:FF:000005">
    <property type="entry name" value="Porphobilinogen deaminase"/>
    <property type="match status" value="1"/>
</dbReference>
<dbReference type="Gene3D" id="3.40.190.10">
    <property type="entry name" value="Periplasmic binding protein-like II"/>
    <property type="match status" value="2"/>
</dbReference>
<dbReference type="Gene3D" id="3.30.160.40">
    <property type="entry name" value="Porphobilinogen deaminase, C-terminal domain"/>
    <property type="match status" value="1"/>
</dbReference>
<dbReference type="HAMAP" id="MF_00260">
    <property type="entry name" value="Porphobil_deam"/>
    <property type="match status" value="1"/>
</dbReference>
<dbReference type="InterPro" id="IPR000860">
    <property type="entry name" value="HemC"/>
</dbReference>
<dbReference type="InterPro" id="IPR022419">
    <property type="entry name" value="Porphobilin_deaminase_cofac_BS"/>
</dbReference>
<dbReference type="InterPro" id="IPR022417">
    <property type="entry name" value="Porphobilin_deaminase_N"/>
</dbReference>
<dbReference type="InterPro" id="IPR022418">
    <property type="entry name" value="Porphobilinogen_deaminase_C"/>
</dbReference>
<dbReference type="InterPro" id="IPR036803">
    <property type="entry name" value="Porphobilinogen_deaminase_C_sf"/>
</dbReference>
<dbReference type="NCBIfam" id="TIGR00212">
    <property type="entry name" value="hemC"/>
    <property type="match status" value="1"/>
</dbReference>
<dbReference type="PANTHER" id="PTHR11557">
    <property type="entry name" value="PORPHOBILINOGEN DEAMINASE"/>
    <property type="match status" value="1"/>
</dbReference>
<dbReference type="PANTHER" id="PTHR11557:SF0">
    <property type="entry name" value="PORPHOBILINOGEN DEAMINASE"/>
    <property type="match status" value="1"/>
</dbReference>
<dbReference type="Pfam" id="PF01379">
    <property type="entry name" value="Porphobil_deam"/>
    <property type="match status" value="1"/>
</dbReference>
<dbReference type="Pfam" id="PF03900">
    <property type="entry name" value="Porphobil_deamC"/>
    <property type="match status" value="1"/>
</dbReference>
<dbReference type="PIRSF" id="PIRSF001438">
    <property type="entry name" value="4pyrrol_synth_OHMeBilane_synth"/>
    <property type="match status" value="1"/>
</dbReference>
<dbReference type="PRINTS" id="PR00151">
    <property type="entry name" value="PORPHBDMNASE"/>
</dbReference>
<dbReference type="SUPFAM" id="SSF53850">
    <property type="entry name" value="Periplasmic binding protein-like II"/>
    <property type="match status" value="1"/>
</dbReference>
<dbReference type="SUPFAM" id="SSF54782">
    <property type="entry name" value="Porphobilinogen deaminase (hydroxymethylbilane synthase), C-terminal domain"/>
    <property type="match status" value="1"/>
</dbReference>
<dbReference type="PROSITE" id="PS00533">
    <property type="entry name" value="PORPHOBILINOGEN_DEAM"/>
    <property type="match status" value="1"/>
</dbReference>
<keyword id="KW-0627">Porphyrin biosynthesis</keyword>
<keyword id="KW-1185">Reference proteome</keyword>
<keyword id="KW-0808">Transferase</keyword>
<accession>Q8UC46</accession>
<feature type="chain" id="PRO_0000142900" description="Porphobilinogen deaminase">
    <location>
        <begin position="1"/>
        <end position="309"/>
    </location>
</feature>
<feature type="modified residue" description="S-(dipyrrolylmethanemethyl)cysteine" evidence="1">
    <location>
        <position position="244"/>
    </location>
</feature>
<organism>
    <name type="scientific">Agrobacterium fabrum (strain C58 / ATCC 33970)</name>
    <name type="common">Agrobacterium tumefaciens (strain C58)</name>
    <dbReference type="NCBI Taxonomy" id="176299"/>
    <lineage>
        <taxon>Bacteria</taxon>
        <taxon>Pseudomonadati</taxon>
        <taxon>Pseudomonadota</taxon>
        <taxon>Alphaproteobacteria</taxon>
        <taxon>Hyphomicrobiales</taxon>
        <taxon>Rhizobiaceae</taxon>
        <taxon>Rhizobium/Agrobacterium group</taxon>
        <taxon>Agrobacterium</taxon>
        <taxon>Agrobacterium tumefaciens complex</taxon>
    </lineage>
</organism>
<reference key="1">
    <citation type="journal article" date="2001" name="Science">
        <title>The genome of the natural genetic engineer Agrobacterium tumefaciens C58.</title>
        <authorList>
            <person name="Wood D.W."/>
            <person name="Setubal J.C."/>
            <person name="Kaul R."/>
            <person name="Monks D.E."/>
            <person name="Kitajima J.P."/>
            <person name="Okura V.K."/>
            <person name="Zhou Y."/>
            <person name="Chen L."/>
            <person name="Wood G.E."/>
            <person name="Almeida N.F. Jr."/>
            <person name="Woo L."/>
            <person name="Chen Y."/>
            <person name="Paulsen I.T."/>
            <person name="Eisen J.A."/>
            <person name="Karp P.D."/>
            <person name="Bovee D. Sr."/>
            <person name="Chapman P."/>
            <person name="Clendenning J."/>
            <person name="Deatherage G."/>
            <person name="Gillet W."/>
            <person name="Grant C."/>
            <person name="Kutyavin T."/>
            <person name="Levy R."/>
            <person name="Li M.-J."/>
            <person name="McClelland E."/>
            <person name="Palmieri A."/>
            <person name="Raymond C."/>
            <person name="Rouse G."/>
            <person name="Saenphimmachak C."/>
            <person name="Wu Z."/>
            <person name="Romero P."/>
            <person name="Gordon D."/>
            <person name="Zhang S."/>
            <person name="Yoo H."/>
            <person name="Tao Y."/>
            <person name="Biddle P."/>
            <person name="Jung M."/>
            <person name="Krespan W."/>
            <person name="Perry M."/>
            <person name="Gordon-Kamm B."/>
            <person name="Liao L."/>
            <person name="Kim S."/>
            <person name="Hendrick C."/>
            <person name="Zhao Z.-Y."/>
            <person name="Dolan M."/>
            <person name="Chumley F."/>
            <person name="Tingey S.V."/>
            <person name="Tomb J.-F."/>
            <person name="Gordon M.P."/>
            <person name="Olson M.V."/>
            <person name="Nester E.W."/>
        </authorList>
    </citation>
    <scope>NUCLEOTIDE SEQUENCE [LARGE SCALE GENOMIC DNA]</scope>
    <source>
        <strain>C58 / ATCC 33970</strain>
    </source>
</reference>
<reference key="2">
    <citation type="journal article" date="2001" name="Science">
        <title>Genome sequence of the plant pathogen and biotechnology agent Agrobacterium tumefaciens C58.</title>
        <authorList>
            <person name="Goodner B."/>
            <person name="Hinkle G."/>
            <person name="Gattung S."/>
            <person name="Miller N."/>
            <person name="Blanchard M."/>
            <person name="Qurollo B."/>
            <person name="Goldman B.S."/>
            <person name="Cao Y."/>
            <person name="Askenazi M."/>
            <person name="Halling C."/>
            <person name="Mullin L."/>
            <person name="Houmiel K."/>
            <person name="Gordon J."/>
            <person name="Vaudin M."/>
            <person name="Iartchouk O."/>
            <person name="Epp A."/>
            <person name="Liu F."/>
            <person name="Wollam C."/>
            <person name="Allinger M."/>
            <person name="Doughty D."/>
            <person name="Scott C."/>
            <person name="Lappas C."/>
            <person name="Markelz B."/>
            <person name="Flanagan C."/>
            <person name="Crowell C."/>
            <person name="Gurson J."/>
            <person name="Lomo C."/>
            <person name="Sear C."/>
            <person name="Strub G."/>
            <person name="Cielo C."/>
            <person name="Slater S."/>
        </authorList>
    </citation>
    <scope>NUCLEOTIDE SEQUENCE [LARGE SCALE GENOMIC DNA]</scope>
    <source>
        <strain>C58 / ATCC 33970</strain>
    </source>
</reference>